<feature type="chain" id="PRO_0000253831" description="Uncharacterized protein YDR132C">
    <location>
        <begin position="1"/>
        <end position="495"/>
    </location>
</feature>
<accession>Q03900</accession>
<accession>D6VSB8</accession>
<gene>
    <name type="ordered locus">YDR132C</name>
</gene>
<reference key="1">
    <citation type="journal article" date="1997" name="Nature">
        <title>The nucleotide sequence of Saccharomyces cerevisiae chromosome IV.</title>
        <authorList>
            <person name="Jacq C."/>
            <person name="Alt-Moerbe J."/>
            <person name="Andre B."/>
            <person name="Arnold W."/>
            <person name="Bahr A."/>
            <person name="Ballesta J.P.G."/>
            <person name="Bargues M."/>
            <person name="Baron L."/>
            <person name="Becker A."/>
            <person name="Biteau N."/>
            <person name="Bloecker H."/>
            <person name="Blugeon C."/>
            <person name="Boskovic J."/>
            <person name="Brandt P."/>
            <person name="Brueckner M."/>
            <person name="Buitrago M.J."/>
            <person name="Coster F."/>
            <person name="Delaveau T."/>
            <person name="del Rey F."/>
            <person name="Dujon B."/>
            <person name="Eide L.G."/>
            <person name="Garcia-Cantalejo J.M."/>
            <person name="Goffeau A."/>
            <person name="Gomez-Peris A."/>
            <person name="Granotier C."/>
            <person name="Hanemann V."/>
            <person name="Hankeln T."/>
            <person name="Hoheisel J.D."/>
            <person name="Jaeger W."/>
            <person name="Jimenez A."/>
            <person name="Jonniaux J.-L."/>
            <person name="Kraemer C."/>
            <person name="Kuester H."/>
            <person name="Laamanen P."/>
            <person name="Legros Y."/>
            <person name="Louis E.J."/>
            <person name="Moeller-Rieker S."/>
            <person name="Monnet A."/>
            <person name="Moro M."/>
            <person name="Mueller-Auer S."/>
            <person name="Nussbaumer B."/>
            <person name="Paricio N."/>
            <person name="Paulin L."/>
            <person name="Perea J."/>
            <person name="Perez-Alonso M."/>
            <person name="Perez-Ortin J.E."/>
            <person name="Pohl T.M."/>
            <person name="Prydz H."/>
            <person name="Purnelle B."/>
            <person name="Rasmussen S.W."/>
            <person name="Remacha M.A."/>
            <person name="Revuelta J.L."/>
            <person name="Rieger M."/>
            <person name="Salom D."/>
            <person name="Saluz H.P."/>
            <person name="Saiz J.E."/>
            <person name="Saren A.-M."/>
            <person name="Schaefer M."/>
            <person name="Scharfe M."/>
            <person name="Schmidt E.R."/>
            <person name="Schneider C."/>
            <person name="Scholler P."/>
            <person name="Schwarz S."/>
            <person name="Soler-Mira A."/>
            <person name="Urrestarazu L.A."/>
            <person name="Verhasselt P."/>
            <person name="Vissers S."/>
            <person name="Voet M."/>
            <person name="Volckaert G."/>
            <person name="Wagner G."/>
            <person name="Wambutt R."/>
            <person name="Wedler E."/>
            <person name="Wedler H."/>
            <person name="Woelfl S."/>
            <person name="Harris D.E."/>
            <person name="Bowman S."/>
            <person name="Brown D."/>
            <person name="Churcher C.M."/>
            <person name="Connor R."/>
            <person name="Dedman K."/>
            <person name="Gentles S."/>
            <person name="Hamlin N."/>
            <person name="Hunt S."/>
            <person name="Jones L."/>
            <person name="McDonald S."/>
            <person name="Murphy L.D."/>
            <person name="Niblett D."/>
            <person name="Odell C."/>
            <person name="Oliver K."/>
            <person name="Rajandream M.A."/>
            <person name="Richards C."/>
            <person name="Shore L."/>
            <person name="Walsh S.V."/>
            <person name="Barrell B.G."/>
            <person name="Dietrich F.S."/>
            <person name="Mulligan J.T."/>
            <person name="Allen E."/>
            <person name="Araujo R."/>
            <person name="Aviles E."/>
            <person name="Berno A."/>
            <person name="Carpenter J."/>
            <person name="Chen E."/>
            <person name="Cherry J.M."/>
            <person name="Chung E."/>
            <person name="Duncan M."/>
            <person name="Hunicke-Smith S."/>
            <person name="Hyman R.W."/>
            <person name="Komp C."/>
            <person name="Lashkari D."/>
            <person name="Lew H."/>
            <person name="Lin D."/>
            <person name="Mosedale D."/>
            <person name="Nakahara K."/>
            <person name="Namath A."/>
            <person name="Oefner P."/>
            <person name="Oh C."/>
            <person name="Petel F.X."/>
            <person name="Roberts D."/>
            <person name="Schramm S."/>
            <person name="Schroeder M."/>
            <person name="Shogren T."/>
            <person name="Shroff N."/>
            <person name="Winant A."/>
            <person name="Yelton M.A."/>
            <person name="Botstein D."/>
            <person name="Davis R.W."/>
            <person name="Johnston M."/>
            <person name="Andrews S."/>
            <person name="Brinkman R."/>
            <person name="Cooper J."/>
            <person name="Ding H."/>
            <person name="Du Z."/>
            <person name="Favello A."/>
            <person name="Fulton L."/>
            <person name="Gattung S."/>
            <person name="Greco T."/>
            <person name="Hallsworth K."/>
            <person name="Hawkins J."/>
            <person name="Hillier L.W."/>
            <person name="Jier M."/>
            <person name="Johnson D."/>
            <person name="Johnston L."/>
            <person name="Kirsten J."/>
            <person name="Kucaba T."/>
            <person name="Langston Y."/>
            <person name="Latreille P."/>
            <person name="Le T."/>
            <person name="Mardis E."/>
            <person name="Menezes S."/>
            <person name="Miller N."/>
            <person name="Nhan M."/>
            <person name="Pauley A."/>
            <person name="Peluso D."/>
            <person name="Rifkin L."/>
            <person name="Riles L."/>
            <person name="Taich A."/>
            <person name="Trevaskis E."/>
            <person name="Vignati D."/>
            <person name="Wilcox L."/>
            <person name="Wohldman P."/>
            <person name="Vaudin M."/>
            <person name="Wilson R."/>
            <person name="Waterston R."/>
            <person name="Albermann K."/>
            <person name="Hani J."/>
            <person name="Heumann K."/>
            <person name="Kleine K."/>
            <person name="Mewes H.-W."/>
            <person name="Zollner A."/>
            <person name="Zaccaria P."/>
        </authorList>
    </citation>
    <scope>NUCLEOTIDE SEQUENCE [LARGE SCALE GENOMIC DNA]</scope>
    <source>
        <strain>ATCC 204508 / S288c</strain>
    </source>
</reference>
<reference key="2">
    <citation type="journal article" date="2014" name="G3 (Bethesda)">
        <title>The reference genome sequence of Saccharomyces cerevisiae: Then and now.</title>
        <authorList>
            <person name="Engel S.R."/>
            <person name="Dietrich F.S."/>
            <person name="Fisk D.G."/>
            <person name="Binkley G."/>
            <person name="Balakrishnan R."/>
            <person name="Costanzo M.C."/>
            <person name="Dwight S.S."/>
            <person name="Hitz B.C."/>
            <person name="Karra K."/>
            <person name="Nash R.S."/>
            <person name="Weng S."/>
            <person name="Wong E.D."/>
            <person name="Lloyd P."/>
            <person name="Skrzypek M.S."/>
            <person name="Miyasato S.R."/>
            <person name="Simison M."/>
            <person name="Cherry J.M."/>
        </authorList>
    </citation>
    <scope>GENOME REANNOTATION</scope>
    <source>
        <strain>ATCC 204508 / S288c</strain>
    </source>
</reference>
<reference key="3">
    <citation type="journal article" date="2003" name="Nature">
        <title>Global analysis of protein localization in budding yeast.</title>
        <authorList>
            <person name="Huh W.-K."/>
            <person name="Falvo J.V."/>
            <person name="Gerke L.C."/>
            <person name="Carroll A.S."/>
            <person name="Howson R.W."/>
            <person name="Weissman J.S."/>
            <person name="O'Shea E.K."/>
        </authorList>
    </citation>
    <scope>SUBCELLULAR LOCATION [LARGE SCALE ANALYSIS]</scope>
</reference>
<reference key="4">
    <citation type="journal article" date="2003" name="Nature">
        <title>Global analysis of protein expression in yeast.</title>
        <authorList>
            <person name="Ghaemmaghami S."/>
            <person name="Huh W.-K."/>
            <person name="Bower K."/>
            <person name="Howson R.W."/>
            <person name="Belle A."/>
            <person name="Dephoure N."/>
            <person name="O'Shea E.K."/>
            <person name="Weissman J.S."/>
        </authorList>
    </citation>
    <scope>LEVEL OF PROTEIN EXPRESSION [LARGE SCALE ANALYSIS]</scope>
</reference>
<reference key="5">
    <citation type="journal article" date="2008" name="Mol. Cell. Proteomics">
        <title>A multidimensional chromatography technology for in-depth phosphoproteome analysis.</title>
        <authorList>
            <person name="Albuquerque C.P."/>
            <person name="Smolka M.B."/>
            <person name="Payne S.H."/>
            <person name="Bafna V."/>
            <person name="Eng J."/>
            <person name="Zhou H."/>
        </authorList>
    </citation>
    <scope>IDENTIFICATION BY MASS SPECTROMETRY [LARGE SCALE ANALYSIS]</scope>
</reference>
<dbReference type="EMBL" id="Z48179">
    <property type="protein sequence ID" value="CAA88213.1"/>
    <property type="molecule type" value="Genomic_DNA"/>
</dbReference>
<dbReference type="EMBL" id="BK006938">
    <property type="protein sequence ID" value="DAA11978.1"/>
    <property type="molecule type" value="Genomic_DNA"/>
</dbReference>
<dbReference type="PIR" id="S51859">
    <property type="entry name" value="S51859"/>
</dbReference>
<dbReference type="BioGRID" id="32188">
    <property type="interactions" value="75"/>
</dbReference>
<dbReference type="DIP" id="DIP-1679N"/>
<dbReference type="FunCoup" id="Q03900">
    <property type="interactions" value="20"/>
</dbReference>
<dbReference type="IntAct" id="Q03900">
    <property type="interactions" value="11"/>
</dbReference>
<dbReference type="MINT" id="Q03900"/>
<dbReference type="STRING" id="4932.YDR132C"/>
<dbReference type="iPTMnet" id="Q03900"/>
<dbReference type="PaxDb" id="4932-YDR132C"/>
<dbReference type="PeptideAtlas" id="Q03900"/>
<dbReference type="EnsemblFungi" id="YDR132C_mRNA">
    <property type="protein sequence ID" value="YDR132C"/>
    <property type="gene ID" value="YDR132C"/>
</dbReference>
<dbReference type="KEGG" id="sce:YDR132C"/>
<dbReference type="AGR" id="SGD:S000002539"/>
<dbReference type="SGD" id="S000002539">
    <property type="gene designation" value="YDR132C"/>
</dbReference>
<dbReference type="VEuPathDB" id="FungiDB:YDR132C"/>
<dbReference type="eggNOG" id="ENOG502QRM9">
    <property type="taxonomic scope" value="Eukaryota"/>
</dbReference>
<dbReference type="GeneTree" id="ENSGT00940000176731"/>
<dbReference type="HOGENOM" id="CLU_017395_2_1_1"/>
<dbReference type="InParanoid" id="Q03900"/>
<dbReference type="OMA" id="QYTMLFA"/>
<dbReference type="OrthoDB" id="2414723at2759"/>
<dbReference type="BioCyc" id="YEAST:G3O-29731-MONOMER"/>
<dbReference type="BioGRID-ORCS" id="851710">
    <property type="hits" value="0 hits in 10 CRISPR screens"/>
</dbReference>
<dbReference type="PRO" id="PR:Q03900"/>
<dbReference type="Proteomes" id="UP000002311">
    <property type="component" value="Chromosome IV"/>
</dbReference>
<dbReference type="RNAct" id="Q03900">
    <property type="molecule type" value="protein"/>
</dbReference>
<dbReference type="GO" id="GO:0005737">
    <property type="term" value="C:cytoplasm"/>
    <property type="evidence" value="ECO:0007005"/>
    <property type="project" value="SGD"/>
</dbReference>
<dbReference type="GO" id="GO:0005739">
    <property type="term" value="C:mitochondrion"/>
    <property type="evidence" value="ECO:0007005"/>
    <property type="project" value="SGD"/>
</dbReference>
<dbReference type="GO" id="GO:0005634">
    <property type="term" value="C:nucleus"/>
    <property type="evidence" value="ECO:0007005"/>
    <property type="project" value="SGD"/>
</dbReference>
<dbReference type="GO" id="GO:0051260">
    <property type="term" value="P:protein homooligomerization"/>
    <property type="evidence" value="ECO:0007669"/>
    <property type="project" value="InterPro"/>
</dbReference>
<dbReference type="CDD" id="cd18316">
    <property type="entry name" value="BTB_POZ_KCTD-like"/>
    <property type="match status" value="1"/>
</dbReference>
<dbReference type="FunFam" id="3.30.710.10:FF:000160">
    <property type="entry name" value="YLR108C-like protein"/>
    <property type="match status" value="1"/>
</dbReference>
<dbReference type="Gene3D" id="3.30.710.10">
    <property type="entry name" value="Potassium Channel Kv1.1, Chain A"/>
    <property type="match status" value="2"/>
</dbReference>
<dbReference type="InterPro" id="IPR000210">
    <property type="entry name" value="BTB/POZ_dom"/>
</dbReference>
<dbReference type="InterPro" id="IPR011333">
    <property type="entry name" value="SKP1/BTB/POZ_sf"/>
</dbReference>
<dbReference type="InterPro" id="IPR003131">
    <property type="entry name" value="T1-type_BTB"/>
</dbReference>
<dbReference type="PANTHER" id="PTHR31758">
    <property type="entry name" value="BTB/POZ DOMAIN-CONTAINING PROTEIN YLR108C"/>
    <property type="match status" value="1"/>
</dbReference>
<dbReference type="PANTHER" id="PTHR31758:SF2">
    <property type="entry name" value="BTB_POZ DOMAIN-CONTAINING PROTEIN YLR108C"/>
    <property type="match status" value="1"/>
</dbReference>
<dbReference type="Pfam" id="PF02214">
    <property type="entry name" value="BTB_2"/>
    <property type="match status" value="1"/>
</dbReference>
<dbReference type="SMART" id="SM00225">
    <property type="entry name" value="BTB"/>
    <property type="match status" value="1"/>
</dbReference>
<dbReference type="SUPFAM" id="SSF54695">
    <property type="entry name" value="POZ domain"/>
    <property type="match status" value="2"/>
</dbReference>
<comment type="subcellular location">
    <subcellularLocation>
        <location evidence="1">Cytoplasm</location>
    </subcellularLocation>
    <subcellularLocation>
        <location evidence="1">Nucleus</location>
    </subcellularLocation>
</comment>
<comment type="miscellaneous">
    <text evidence="2">Present with 172 molecules/cell in log phase SD medium.</text>
</comment>
<evidence type="ECO:0000269" key="1">
    <source>
    </source>
</evidence>
<evidence type="ECO:0000269" key="2">
    <source>
    </source>
</evidence>
<protein>
    <recommendedName>
        <fullName>Uncharacterized protein YDR132C</fullName>
    </recommendedName>
</protein>
<organism>
    <name type="scientific">Saccharomyces cerevisiae (strain ATCC 204508 / S288c)</name>
    <name type="common">Baker's yeast</name>
    <dbReference type="NCBI Taxonomy" id="559292"/>
    <lineage>
        <taxon>Eukaryota</taxon>
        <taxon>Fungi</taxon>
        <taxon>Dikarya</taxon>
        <taxon>Ascomycota</taxon>
        <taxon>Saccharomycotina</taxon>
        <taxon>Saccharomycetes</taxon>
        <taxon>Saccharomycetales</taxon>
        <taxon>Saccharomycetaceae</taxon>
        <taxon>Saccharomyces</taxon>
    </lineage>
</organism>
<keyword id="KW-0963">Cytoplasm</keyword>
<keyword id="KW-0539">Nucleus</keyword>
<keyword id="KW-1185">Reference proteome</keyword>
<sequence length="495" mass="57194">MSNSPTVATLSQEYFDPNIPQILPHEKMYKIQVGKSLFKISGASLSSDGPSFFTEYFSKKRSPSNNDDSNNDTMESNKNEVLFIDRSAEVFEWIYQHLQGYIIEIKDEVQYTMLFADAMYYNLPRLRSLLKETDYYFTNIGGQSFKIAKNLFRREGDSPNYFEIYAATVYIDVEELIISKKLLRPPSHSAPYIPRSSEYFKDLLTLLGGASIDLDDNKRNALIKECRYYRLLNLEQRLIKSHISYNPITRKEEICLLLKDLSKKGITFPASSAFSTSPYFEDDFCSINECDSLSKTREQPANKKIKLDMTEKYNDSWNMLCYKRPFLDKHPRELIFQINSTDCTIILNKESQSIHVDITGESAYKFEALFGSHLPNTPSGAPKLKNYQYRFPSDSTQTKIETHYLLPACIYLCDLDINGIKISQVQTLLTDKNKFNDRVIDVSDPLDLRFCSGLKLYLRKSLWKLAVKDGNIMLIAIKAIAFNGTKEYYKGYEYL</sequence>
<name>YD132_YEAST</name>
<proteinExistence type="evidence at protein level"/>